<name>MIMR_MYCGD</name>
<dbReference type="EMBL" id="AB627360">
    <property type="protein sequence ID" value="BAL03068.1"/>
    <property type="molecule type" value="Genomic_DNA"/>
</dbReference>
<dbReference type="SMR" id="G3XGC1"/>
<dbReference type="STRING" id="134601.AFA91_29125"/>
<dbReference type="GO" id="GO:0005524">
    <property type="term" value="F:ATP binding"/>
    <property type="evidence" value="ECO:0007669"/>
    <property type="project" value="UniProtKB-KW"/>
</dbReference>
<dbReference type="GO" id="GO:0043565">
    <property type="term" value="F:sequence-specific DNA binding"/>
    <property type="evidence" value="ECO:0007669"/>
    <property type="project" value="InterPro"/>
</dbReference>
<dbReference type="GO" id="GO:0006355">
    <property type="term" value="P:regulation of DNA-templated transcription"/>
    <property type="evidence" value="ECO:0007669"/>
    <property type="project" value="InterPro"/>
</dbReference>
<dbReference type="Gene3D" id="1.10.8.60">
    <property type="match status" value="1"/>
</dbReference>
<dbReference type="Gene3D" id="3.30.450.40">
    <property type="match status" value="1"/>
</dbReference>
<dbReference type="Gene3D" id="1.10.10.60">
    <property type="entry name" value="Homeodomain-like"/>
    <property type="match status" value="1"/>
</dbReference>
<dbReference type="InterPro" id="IPR003018">
    <property type="entry name" value="GAF"/>
</dbReference>
<dbReference type="InterPro" id="IPR029016">
    <property type="entry name" value="GAF-like_dom_sf"/>
</dbReference>
<dbReference type="InterPro" id="IPR009057">
    <property type="entry name" value="Homeodomain-like_sf"/>
</dbReference>
<dbReference type="InterPro" id="IPR002197">
    <property type="entry name" value="HTH_Fis"/>
</dbReference>
<dbReference type="InterPro" id="IPR027417">
    <property type="entry name" value="P-loop_NTPase"/>
</dbReference>
<dbReference type="InterPro" id="IPR002078">
    <property type="entry name" value="Sigma_54_int"/>
</dbReference>
<dbReference type="PANTHER" id="PTHR32071:SF122">
    <property type="entry name" value="SIGMA FACTOR"/>
    <property type="match status" value="1"/>
</dbReference>
<dbReference type="PANTHER" id="PTHR32071">
    <property type="entry name" value="TRANSCRIPTIONAL REGULATORY PROTEIN"/>
    <property type="match status" value="1"/>
</dbReference>
<dbReference type="Pfam" id="PF01590">
    <property type="entry name" value="GAF"/>
    <property type="match status" value="1"/>
</dbReference>
<dbReference type="Pfam" id="PF02954">
    <property type="entry name" value="HTH_8"/>
    <property type="match status" value="1"/>
</dbReference>
<dbReference type="PRINTS" id="PR01590">
    <property type="entry name" value="HTHFIS"/>
</dbReference>
<dbReference type="SUPFAM" id="SSF46689">
    <property type="entry name" value="Homeodomain-like"/>
    <property type="match status" value="1"/>
</dbReference>
<dbReference type="SUPFAM" id="SSF52540">
    <property type="entry name" value="P-loop containing nucleoside triphosphate hydrolases"/>
    <property type="match status" value="1"/>
</dbReference>
<dbReference type="PROSITE" id="PS50045">
    <property type="entry name" value="SIGMA54_INTERACT_4"/>
    <property type="match status" value="1"/>
</dbReference>
<accession>G3XGC1</accession>
<proteinExistence type="predicted"/>
<protein>
    <recommendedName>
        <fullName evidence="3">Propane 2-monooxygenase operon transcriptional activator MimR</fullName>
    </recommendedName>
</protein>
<reference key="1">
    <citation type="journal article" date="2011" name="J. Bacteriol.">
        <title>Identification of the regulator gene responsible for the acetone-responsive expression of the binuclear iron monooxygenase gene cluster in Mycobacteria.</title>
        <authorList>
            <person name="Furuya T."/>
            <person name="Hirose S."/>
            <person name="Semba H."/>
            <person name="Kino K."/>
        </authorList>
    </citation>
    <scope>NUCLEOTIDE SEQUENCE [GENOMIC DNA]</scope>
    <scope>FUNCTION</scope>
    <source>
        <strain evidence="4">12523</strain>
    </source>
</reference>
<feature type="chain" id="PRO_0000442977" description="Propane 2-monooxygenase operon transcriptional activator MimR">
    <location>
        <begin position="1"/>
        <end position="583"/>
    </location>
</feature>
<feature type="domain" description="Sigma-54 factor interaction" evidence="1">
    <location>
        <begin position="320"/>
        <end position="513"/>
    </location>
</feature>
<feature type="binding site" evidence="1">
    <location>
        <begin position="348"/>
        <end position="355"/>
    </location>
    <ligand>
        <name>ATP</name>
        <dbReference type="ChEBI" id="CHEBI:30616"/>
    </ligand>
</feature>
<feature type="binding site" evidence="1">
    <location>
        <begin position="395"/>
        <end position="404"/>
    </location>
    <ligand>
        <name>ATP</name>
        <dbReference type="ChEBI" id="CHEBI:30616"/>
    </ligand>
</feature>
<gene>
    <name evidence="3" type="primary">mimR</name>
</gene>
<comment type="function">
    <text evidence="2">Acts as a transcriptional activator of the mimABCD operon encoding the propane 2-monooxygenase complex.</text>
</comment>
<organism>
    <name type="scientific">Mycolicibacterium goodii</name>
    <name type="common">Mycobacterium goodii</name>
    <dbReference type="NCBI Taxonomy" id="134601"/>
    <lineage>
        <taxon>Bacteria</taxon>
        <taxon>Bacillati</taxon>
        <taxon>Actinomycetota</taxon>
        <taxon>Actinomycetes</taxon>
        <taxon>Mycobacteriales</taxon>
        <taxon>Mycobacteriaceae</taxon>
        <taxon>Mycolicibacterium</taxon>
    </lineage>
</organism>
<evidence type="ECO:0000255" key="1">
    <source>
        <dbReference type="PROSITE-ProRule" id="PRU00193"/>
    </source>
</evidence>
<evidence type="ECO:0000269" key="2">
    <source ref="1"/>
</evidence>
<evidence type="ECO:0000303" key="3">
    <source ref="1"/>
</evidence>
<evidence type="ECO:0000312" key="4">
    <source>
        <dbReference type="EMBL" id="BAL03068.1"/>
    </source>
</evidence>
<sequence length="583" mass="64013">MVRPADSSVDAQRAREQFLSAGALQPDAVAPSVLNSWQRSRELQVHPDRVDLPYLRDPDTDTPLMHAAAPVLRRIAEDLSDQAVSVVLTSADGLVLDRIAADTEFERILDDVRLARGYSYAEEFAGTNGIGTALETGQPAFIRGSEHYVGTLGGLACAGSPIREPVTRRILGVVDLTCWARQADPLLFVLAKSAGSQIEDRLRTMNNETETALLDAYLKQSRRYPGGVLAIGGDVVLMNRYLRQALDAADQTVLLDHAAELTRSSFTSTTVAQLPSGASVKISAAERIMVGVRGDSVVLHVSVHVAESIPVRGSQHIPRLAGRSSSFRRSAHQVERCYRDREWVVIEGEKGSGRTHLGYSVARFVTPEKTIPVLRIGDFETPESFVAAFDSETDDADFAVIVADVDELPDEVLHPLAAVMQTRAGRGWIAATTSAERDSQLVDMLMLPFFIHTVTVPALRHRIEDLHELVPMLLNELSRGEARMDAEAMRQLAKLPWPGNIAQLRHVLTETLRRQRSGVIGADKLPSECRSVTRRKLTRLEAMERDAIVRSLLENDGNKAEAAEALGMSRATIYRKIKDFGIA</sequence>
<keyword id="KW-0010">Activator</keyword>
<keyword id="KW-0067">ATP-binding</keyword>
<keyword id="KW-0238">DNA-binding</keyword>
<keyword id="KW-0547">Nucleotide-binding</keyword>
<keyword id="KW-0804">Transcription</keyword>
<keyword id="KW-0805">Transcription regulation</keyword>